<comment type="function">
    <text evidence="1">Catalyzes the transfer of the gamma-phosphate of ATP to D-galactose to form alpha-D-galactose-1-phosphate (Gal-1-P).</text>
</comment>
<comment type="catalytic activity">
    <reaction evidence="1">
        <text>alpha-D-galactose + ATP = alpha-D-galactose 1-phosphate + ADP + H(+)</text>
        <dbReference type="Rhea" id="RHEA:13553"/>
        <dbReference type="ChEBI" id="CHEBI:15378"/>
        <dbReference type="ChEBI" id="CHEBI:28061"/>
        <dbReference type="ChEBI" id="CHEBI:30616"/>
        <dbReference type="ChEBI" id="CHEBI:58336"/>
        <dbReference type="ChEBI" id="CHEBI:456216"/>
        <dbReference type="EC" id="2.7.1.6"/>
    </reaction>
</comment>
<comment type="pathway">
    <text evidence="1">Carbohydrate metabolism; galactose metabolism.</text>
</comment>
<comment type="subcellular location">
    <subcellularLocation>
        <location evidence="1">Cytoplasm</location>
    </subcellularLocation>
</comment>
<comment type="similarity">
    <text evidence="1">Belongs to the GHMP kinase family. GalK subfamily.</text>
</comment>
<gene>
    <name evidence="1" type="primary">galK</name>
    <name type="ordered locus">SPAB_02747</name>
</gene>
<accession>A9MTL0</accession>
<keyword id="KW-0067">ATP-binding</keyword>
<keyword id="KW-0119">Carbohydrate metabolism</keyword>
<keyword id="KW-0963">Cytoplasm</keyword>
<keyword id="KW-0299">Galactose metabolism</keyword>
<keyword id="KW-0418">Kinase</keyword>
<keyword id="KW-0460">Magnesium</keyword>
<keyword id="KW-0479">Metal-binding</keyword>
<keyword id="KW-0547">Nucleotide-binding</keyword>
<keyword id="KW-0808">Transferase</keyword>
<feature type="chain" id="PRO_1000078409" description="Galactokinase">
    <location>
        <begin position="1"/>
        <end position="382"/>
    </location>
</feature>
<feature type="active site" description="Proton acceptor" evidence="1">
    <location>
        <position position="174"/>
    </location>
</feature>
<feature type="binding site" evidence="1">
    <location>
        <begin position="34"/>
        <end position="37"/>
    </location>
    <ligand>
        <name>substrate</name>
    </ligand>
</feature>
<feature type="binding site" evidence="1">
    <location>
        <begin position="124"/>
        <end position="130"/>
    </location>
    <ligand>
        <name>ATP</name>
        <dbReference type="ChEBI" id="CHEBI:30616"/>
    </ligand>
</feature>
<feature type="binding site" evidence="1">
    <location>
        <position position="130"/>
    </location>
    <ligand>
        <name>Mg(2+)</name>
        <dbReference type="ChEBI" id="CHEBI:18420"/>
    </ligand>
</feature>
<feature type="binding site" evidence="1">
    <location>
        <position position="162"/>
    </location>
    <ligand>
        <name>Mg(2+)</name>
        <dbReference type="ChEBI" id="CHEBI:18420"/>
    </ligand>
</feature>
<feature type="binding site" evidence="1">
    <location>
        <position position="223"/>
    </location>
    <ligand>
        <name>substrate</name>
    </ligand>
</feature>
<feature type="site" description="Transition state stabilizer" evidence="1">
    <location>
        <position position="28"/>
    </location>
</feature>
<proteinExistence type="inferred from homology"/>
<evidence type="ECO:0000255" key="1">
    <source>
        <dbReference type="HAMAP-Rule" id="MF_00246"/>
    </source>
</evidence>
<sequence length="382" mass="41300">MNLKEKTRALFAEIFGYPATHTIQAPGRVNLIGEHTDYNDGFVLPCAIDYQTVISCAPRDDRTVRVIAADYDNQVDEFSLDAPIVTYDSQQWSNYVRGVVKHLQQRNNAFGGVDMVISGNVPQGAGLSSSASLEVAVGTVFQQLYHLPLDGAQIALNGQEAENQFVGCNCGIMDQLISALGKKDHALLIDCRTLGAKAVSMPKGVAVVIINSNFKRTLVGSEYNTRREQCETGARFFQQPALRDVSLEAFNAVASELDPVVAKRVRHVLSENARTVEAASALEKGDLQRMGQLMAESHASMRDDFEITVPQIDTLVDIVKATIGDQGGVRMTGGGFGGCVVALIPEDLVPAVRQAVAQQYEAKTGIKETFYVCKPSQGAGQC</sequence>
<organism>
    <name type="scientific">Salmonella paratyphi B (strain ATCC BAA-1250 / SPB7)</name>
    <dbReference type="NCBI Taxonomy" id="1016998"/>
    <lineage>
        <taxon>Bacteria</taxon>
        <taxon>Pseudomonadati</taxon>
        <taxon>Pseudomonadota</taxon>
        <taxon>Gammaproteobacteria</taxon>
        <taxon>Enterobacterales</taxon>
        <taxon>Enterobacteriaceae</taxon>
        <taxon>Salmonella</taxon>
    </lineage>
</organism>
<dbReference type="EC" id="2.7.1.6" evidence="1"/>
<dbReference type="EMBL" id="CP000886">
    <property type="protein sequence ID" value="ABX68125.1"/>
    <property type="molecule type" value="Genomic_DNA"/>
</dbReference>
<dbReference type="RefSeq" id="WP_001049371.1">
    <property type="nucleotide sequence ID" value="NC_010102.1"/>
</dbReference>
<dbReference type="SMR" id="A9MTL0"/>
<dbReference type="KEGG" id="spq:SPAB_02747"/>
<dbReference type="PATRIC" id="fig|1016998.12.peg.2599"/>
<dbReference type="HOGENOM" id="CLU_017814_2_1_6"/>
<dbReference type="BioCyc" id="SENT1016998:SPAB_RS11170-MONOMER"/>
<dbReference type="UniPathway" id="UPA00214"/>
<dbReference type="Proteomes" id="UP000008556">
    <property type="component" value="Chromosome"/>
</dbReference>
<dbReference type="GO" id="GO:0005829">
    <property type="term" value="C:cytosol"/>
    <property type="evidence" value="ECO:0007669"/>
    <property type="project" value="TreeGrafter"/>
</dbReference>
<dbReference type="GO" id="GO:0005524">
    <property type="term" value="F:ATP binding"/>
    <property type="evidence" value="ECO:0007669"/>
    <property type="project" value="UniProtKB-UniRule"/>
</dbReference>
<dbReference type="GO" id="GO:0004335">
    <property type="term" value="F:galactokinase activity"/>
    <property type="evidence" value="ECO:0007669"/>
    <property type="project" value="UniProtKB-UniRule"/>
</dbReference>
<dbReference type="GO" id="GO:0000287">
    <property type="term" value="F:magnesium ion binding"/>
    <property type="evidence" value="ECO:0007669"/>
    <property type="project" value="UniProtKB-UniRule"/>
</dbReference>
<dbReference type="GO" id="GO:0006012">
    <property type="term" value="P:galactose metabolic process"/>
    <property type="evidence" value="ECO:0007669"/>
    <property type="project" value="UniProtKB-UniRule"/>
</dbReference>
<dbReference type="FunFam" id="3.30.230.10:FF:000017">
    <property type="entry name" value="Galactokinase"/>
    <property type="match status" value="1"/>
</dbReference>
<dbReference type="FunFam" id="3.30.70.890:FF:000001">
    <property type="entry name" value="Galactokinase"/>
    <property type="match status" value="1"/>
</dbReference>
<dbReference type="Gene3D" id="3.30.230.10">
    <property type="match status" value="1"/>
</dbReference>
<dbReference type="Gene3D" id="3.30.70.890">
    <property type="entry name" value="GHMP kinase, C-terminal domain"/>
    <property type="match status" value="1"/>
</dbReference>
<dbReference type="HAMAP" id="MF_00246">
    <property type="entry name" value="Galactokinase"/>
    <property type="match status" value="1"/>
</dbReference>
<dbReference type="InterPro" id="IPR000705">
    <property type="entry name" value="Galactokinase"/>
</dbReference>
<dbReference type="InterPro" id="IPR022963">
    <property type="entry name" value="Galactokinase_bac"/>
</dbReference>
<dbReference type="InterPro" id="IPR019741">
    <property type="entry name" value="Galactokinase_CS"/>
</dbReference>
<dbReference type="InterPro" id="IPR019539">
    <property type="entry name" value="GalKase_N"/>
</dbReference>
<dbReference type="InterPro" id="IPR013750">
    <property type="entry name" value="GHMP_kinase_C_dom"/>
</dbReference>
<dbReference type="InterPro" id="IPR036554">
    <property type="entry name" value="GHMP_kinase_C_sf"/>
</dbReference>
<dbReference type="InterPro" id="IPR006204">
    <property type="entry name" value="GHMP_kinase_N_dom"/>
</dbReference>
<dbReference type="InterPro" id="IPR006203">
    <property type="entry name" value="GHMP_knse_ATP-bd_CS"/>
</dbReference>
<dbReference type="InterPro" id="IPR006206">
    <property type="entry name" value="Mevalonate/galactokinase"/>
</dbReference>
<dbReference type="InterPro" id="IPR020568">
    <property type="entry name" value="Ribosomal_Su5_D2-typ_SF"/>
</dbReference>
<dbReference type="InterPro" id="IPR014721">
    <property type="entry name" value="Ribsml_uS5_D2-typ_fold_subgr"/>
</dbReference>
<dbReference type="NCBIfam" id="TIGR00131">
    <property type="entry name" value="gal_kin"/>
    <property type="match status" value="1"/>
</dbReference>
<dbReference type="NCBIfam" id="NF003472">
    <property type="entry name" value="PRK05101.1"/>
    <property type="match status" value="1"/>
</dbReference>
<dbReference type="PANTHER" id="PTHR10457:SF7">
    <property type="entry name" value="GALACTOKINASE-RELATED"/>
    <property type="match status" value="1"/>
</dbReference>
<dbReference type="PANTHER" id="PTHR10457">
    <property type="entry name" value="MEVALONATE KINASE/GALACTOKINASE"/>
    <property type="match status" value="1"/>
</dbReference>
<dbReference type="Pfam" id="PF10509">
    <property type="entry name" value="GalKase_gal_bdg"/>
    <property type="match status" value="1"/>
</dbReference>
<dbReference type="Pfam" id="PF08544">
    <property type="entry name" value="GHMP_kinases_C"/>
    <property type="match status" value="1"/>
</dbReference>
<dbReference type="Pfam" id="PF00288">
    <property type="entry name" value="GHMP_kinases_N"/>
    <property type="match status" value="1"/>
</dbReference>
<dbReference type="PIRSF" id="PIRSF000530">
    <property type="entry name" value="Galactokinase"/>
    <property type="match status" value="1"/>
</dbReference>
<dbReference type="PRINTS" id="PR00473">
    <property type="entry name" value="GALCTOKINASE"/>
</dbReference>
<dbReference type="PRINTS" id="PR00959">
    <property type="entry name" value="MEVGALKINASE"/>
</dbReference>
<dbReference type="SUPFAM" id="SSF55060">
    <property type="entry name" value="GHMP Kinase, C-terminal domain"/>
    <property type="match status" value="1"/>
</dbReference>
<dbReference type="SUPFAM" id="SSF54211">
    <property type="entry name" value="Ribosomal protein S5 domain 2-like"/>
    <property type="match status" value="1"/>
</dbReference>
<dbReference type="PROSITE" id="PS00106">
    <property type="entry name" value="GALACTOKINASE"/>
    <property type="match status" value="1"/>
</dbReference>
<dbReference type="PROSITE" id="PS00627">
    <property type="entry name" value="GHMP_KINASES_ATP"/>
    <property type="match status" value="1"/>
</dbReference>
<name>GAL1_SALPB</name>
<protein>
    <recommendedName>
        <fullName evidence="1">Galactokinase</fullName>
        <ecNumber evidence="1">2.7.1.6</ecNumber>
    </recommendedName>
    <alternativeName>
        <fullName evidence="1">Galactose kinase</fullName>
    </alternativeName>
</protein>
<reference key="1">
    <citation type="submission" date="2007-11" db="EMBL/GenBank/DDBJ databases">
        <authorList>
            <consortium name="The Salmonella enterica serovar Paratyphi B Genome Sequencing Project"/>
            <person name="McClelland M."/>
            <person name="Sanderson E.K."/>
            <person name="Porwollik S."/>
            <person name="Spieth J."/>
            <person name="Clifton W.S."/>
            <person name="Fulton R."/>
            <person name="Cordes M."/>
            <person name="Wollam A."/>
            <person name="Shah N."/>
            <person name="Pepin K."/>
            <person name="Bhonagiri V."/>
            <person name="Nash W."/>
            <person name="Johnson M."/>
            <person name="Thiruvilangam P."/>
            <person name="Wilson R."/>
        </authorList>
    </citation>
    <scope>NUCLEOTIDE SEQUENCE [LARGE SCALE GENOMIC DNA]</scope>
    <source>
        <strain>ATCC BAA-1250 / SPB7</strain>
    </source>
</reference>